<keyword id="KW-0687">Ribonucleoprotein</keyword>
<keyword id="KW-0689">Ribosomal protein</keyword>
<keyword id="KW-0694">RNA-binding</keyword>
<keyword id="KW-0699">rRNA-binding</keyword>
<name>RL9_BURTA</name>
<organism>
    <name type="scientific">Burkholderia thailandensis (strain ATCC 700388 / DSM 13276 / CCUG 48851 / CIP 106301 / E264)</name>
    <dbReference type="NCBI Taxonomy" id="271848"/>
    <lineage>
        <taxon>Bacteria</taxon>
        <taxon>Pseudomonadati</taxon>
        <taxon>Pseudomonadota</taxon>
        <taxon>Betaproteobacteria</taxon>
        <taxon>Burkholderiales</taxon>
        <taxon>Burkholderiaceae</taxon>
        <taxon>Burkholderia</taxon>
        <taxon>pseudomallei group</taxon>
    </lineage>
</organism>
<sequence length="150" mass="16188">MQIILLEKVANLGNLGDIVKVKDGYARNFLIPNRKARRATKDAIAEFEVRRAELEKIAAEKLAAAQAVGEKLSGQAFEITQKSGVDGRLFGSVTNGDVAELLKKAGYEVEKAQVRMPEGPLKMIGEHGVQVALHTDVVVDVTVNVIGDHA</sequence>
<comment type="function">
    <text evidence="1">Binds to the 23S rRNA.</text>
</comment>
<comment type="similarity">
    <text evidence="1">Belongs to the bacterial ribosomal protein bL9 family.</text>
</comment>
<accession>Q2SWJ6</accession>
<gene>
    <name evidence="1" type="primary">rplI</name>
    <name type="ordered locus">BTH_I2182</name>
</gene>
<dbReference type="EMBL" id="CP000086">
    <property type="protein sequence ID" value="ABC36616.1"/>
    <property type="molecule type" value="Genomic_DNA"/>
</dbReference>
<dbReference type="RefSeq" id="WP_009890725.1">
    <property type="nucleotide sequence ID" value="NZ_CP008785.1"/>
</dbReference>
<dbReference type="SMR" id="Q2SWJ6"/>
<dbReference type="GeneID" id="45121901"/>
<dbReference type="KEGG" id="bte:BTH_I2182"/>
<dbReference type="HOGENOM" id="CLU_078938_4_1_4"/>
<dbReference type="Proteomes" id="UP000001930">
    <property type="component" value="Chromosome I"/>
</dbReference>
<dbReference type="GO" id="GO:1990904">
    <property type="term" value="C:ribonucleoprotein complex"/>
    <property type="evidence" value="ECO:0007669"/>
    <property type="project" value="UniProtKB-KW"/>
</dbReference>
<dbReference type="GO" id="GO:0005840">
    <property type="term" value="C:ribosome"/>
    <property type="evidence" value="ECO:0007669"/>
    <property type="project" value="UniProtKB-KW"/>
</dbReference>
<dbReference type="GO" id="GO:0019843">
    <property type="term" value="F:rRNA binding"/>
    <property type="evidence" value="ECO:0007669"/>
    <property type="project" value="UniProtKB-UniRule"/>
</dbReference>
<dbReference type="GO" id="GO:0003735">
    <property type="term" value="F:structural constituent of ribosome"/>
    <property type="evidence" value="ECO:0007669"/>
    <property type="project" value="InterPro"/>
</dbReference>
<dbReference type="GO" id="GO:0006412">
    <property type="term" value="P:translation"/>
    <property type="evidence" value="ECO:0007669"/>
    <property type="project" value="UniProtKB-UniRule"/>
</dbReference>
<dbReference type="Gene3D" id="3.10.430.100">
    <property type="entry name" value="Ribosomal protein L9, C-terminal domain"/>
    <property type="match status" value="1"/>
</dbReference>
<dbReference type="Gene3D" id="3.40.5.10">
    <property type="entry name" value="Ribosomal protein L9, N-terminal domain"/>
    <property type="match status" value="1"/>
</dbReference>
<dbReference type="HAMAP" id="MF_00503">
    <property type="entry name" value="Ribosomal_bL9"/>
    <property type="match status" value="1"/>
</dbReference>
<dbReference type="InterPro" id="IPR000244">
    <property type="entry name" value="Ribosomal_bL9"/>
</dbReference>
<dbReference type="InterPro" id="IPR009027">
    <property type="entry name" value="Ribosomal_bL9/RNase_H1_N"/>
</dbReference>
<dbReference type="InterPro" id="IPR020594">
    <property type="entry name" value="Ribosomal_bL9_bac/chp"/>
</dbReference>
<dbReference type="InterPro" id="IPR020069">
    <property type="entry name" value="Ribosomal_bL9_C"/>
</dbReference>
<dbReference type="InterPro" id="IPR036791">
    <property type="entry name" value="Ribosomal_bL9_C_sf"/>
</dbReference>
<dbReference type="InterPro" id="IPR020070">
    <property type="entry name" value="Ribosomal_bL9_N"/>
</dbReference>
<dbReference type="InterPro" id="IPR036935">
    <property type="entry name" value="Ribosomal_bL9_N_sf"/>
</dbReference>
<dbReference type="NCBIfam" id="TIGR00158">
    <property type="entry name" value="L9"/>
    <property type="match status" value="1"/>
</dbReference>
<dbReference type="PANTHER" id="PTHR21368">
    <property type="entry name" value="50S RIBOSOMAL PROTEIN L9"/>
    <property type="match status" value="1"/>
</dbReference>
<dbReference type="Pfam" id="PF03948">
    <property type="entry name" value="Ribosomal_L9_C"/>
    <property type="match status" value="1"/>
</dbReference>
<dbReference type="Pfam" id="PF01281">
    <property type="entry name" value="Ribosomal_L9_N"/>
    <property type="match status" value="1"/>
</dbReference>
<dbReference type="SUPFAM" id="SSF55658">
    <property type="entry name" value="L9 N-domain-like"/>
    <property type="match status" value="1"/>
</dbReference>
<dbReference type="SUPFAM" id="SSF55653">
    <property type="entry name" value="Ribosomal protein L9 C-domain"/>
    <property type="match status" value="1"/>
</dbReference>
<dbReference type="PROSITE" id="PS00651">
    <property type="entry name" value="RIBOSOMAL_L9"/>
    <property type="match status" value="1"/>
</dbReference>
<proteinExistence type="inferred from homology"/>
<feature type="chain" id="PRO_0000236501" description="Large ribosomal subunit protein bL9">
    <location>
        <begin position="1"/>
        <end position="150"/>
    </location>
</feature>
<reference key="1">
    <citation type="journal article" date="2005" name="BMC Genomics">
        <title>Bacterial genome adaptation to niches: divergence of the potential virulence genes in three Burkholderia species of different survival strategies.</title>
        <authorList>
            <person name="Kim H.S."/>
            <person name="Schell M.A."/>
            <person name="Yu Y."/>
            <person name="Ulrich R.L."/>
            <person name="Sarria S.H."/>
            <person name="Nierman W.C."/>
            <person name="DeShazer D."/>
        </authorList>
    </citation>
    <scope>NUCLEOTIDE SEQUENCE [LARGE SCALE GENOMIC DNA]</scope>
    <source>
        <strain>ATCC 700388 / DSM 13276 / CCUG 48851 / CIP 106301 / E264</strain>
    </source>
</reference>
<protein>
    <recommendedName>
        <fullName evidence="1">Large ribosomal subunit protein bL9</fullName>
    </recommendedName>
    <alternativeName>
        <fullName evidence="2">50S ribosomal protein L9</fullName>
    </alternativeName>
</protein>
<evidence type="ECO:0000255" key="1">
    <source>
        <dbReference type="HAMAP-Rule" id="MF_00503"/>
    </source>
</evidence>
<evidence type="ECO:0000305" key="2"/>